<dbReference type="EMBL" id="CP000386">
    <property type="protein sequence ID" value="ABG04479.1"/>
    <property type="molecule type" value="Genomic_DNA"/>
</dbReference>
<dbReference type="RefSeq" id="WP_011564496.1">
    <property type="nucleotide sequence ID" value="NC_008148.1"/>
</dbReference>
<dbReference type="SMR" id="Q1AVU9"/>
<dbReference type="STRING" id="266117.Rxyl_1517"/>
<dbReference type="KEGG" id="rxy:Rxyl_1517"/>
<dbReference type="eggNOG" id="COG0268">
    <property type="taxonomic scope" value="Bacteria"/>
</dbReference>
<dbReference type="HOGENOM" id="CLU_160655_3_1_11"/>
<dbReference type="PhylomeDB" id="Q1AVU9"/>
<dbReference type="Proteomes" id="UP000006637">
    <property type="component" value="Chromosome"/>
</dbReference>
<dbReference type="GO" id="GO:0005829">
    <property type="term" value="C:cytosol"/>
    <property type="evidence" value="ECO:0007669"/>
    <property type="project" value="TreeGrafter"/>
</dbReference>
<dbReference type="GO" id="GO:0015935">
    <property type="term" value="C:small ribosomal subunit"/>
    <property type="evidence" value="ECO:0007669"/>
    <property type="project" value="TreeGrafter"/>
</dbReference>
<dbReference type="GO" id="GO:0070181">
    <property type="term" value="F:small ribosomal subunit rRNA binding"/>
    <property type="evidence" value="ECO:0007669"/>
    <property type="project" value="TreeGrafter"/>
</dbReference>
<dbReference type="GO" id="GO:0003735">
    <property type="term" value="F:structural constituent of ribosome"/>
    <property type="evidence" value="ECO:0007669"/>
    <property type="project" value="InterPro"/>
</dbReference>
<dbReference type="GO" id="GO:0006412">
    <property type="term" value="P:translation"/>
    <property type="evidence" value="ECO:0007669"/>
    <property type="project" value="UniProtKB-UniRule"/>
</dbReference>
<dbReference type="Gene3D" id="1.20.58.110">
    <property type="entry name" value="Ribosomal protein S20"/>
    <property type="match status" value="1"/>
</dbReference>
<dbReference type="HAMAP" id="MF_00500">
    <property type="entry name" value="Ribosomal_bS20"/>
    <property type="match status" value="1"/>
</dbReference>
<dbReference type="InterPro" id="IPR002583">
    <property type="entry name" value="Ribosomal_bS20"/>
</dbReference>
<dbReference type="InterPro" id="IPR036510">
    <property type="entry name" value="Ribosomal_bS20_sf"/>
</dbReference>
<dbReference type="NCBIfam" id="TIGR00029">
    <property type="entry name" value="S20"/>
    <property type="match status" value="1"/>
</dbReference>
<dbReference type="PANTHER" id="PTHR33398">
    <property type="entry name" value="30S RIBOSOMAL PROTEIN S20"/>
    <property type="match status" value="1"/>
</dbReference>
<dbReference type="PANTHER" id="PTHR33398:SF1">
    <property type="entry name" value="SMALL RIBOSOMAL SUBUNIT PROTEIN BS20C"/>
    <property type="match status" value="1"/>
</dbReference>
<dbReference type="Pfam" id="PF01649">
    <property type="entry name" value="Ribosomal_S20p"/>
    <property type="match status" value="1"/>
</dbReference>
<dbReference type="SUPFAM" id="SSF46992">
    <property type="entry name" value="Ribosomal protein S20"/>
    <property type="match status" value="1"/>
</dbReference>
<sequence length="84" mass="9757">MPAPTKRERQNRKRFERNRSVRTRLRNLSKKFYRALDAGDLESARSVRDEAQKAYDKAAGKGIIHRNKASRKLSRFDRALAGRG</sequence>
<keyword id="KW-1185">Reference proteome</keyword>
<keyword id="KW-0687">Ribonucleoprotein</keyword>
<keyword id="KW-0689">Ribosomal protein</keyword>
<keyword id="KW-0694">RNA-binding</keyword>
<keyword id="KW-0699">rRNA-binding</keyword>
<name>RS20_RUBXD</name>
<organism>
    <name type="scientific">Rubrobacter xylanophilus (strain DSM 9941 / JCM 11954 / NBRC 16129 / PRD-1)</name>
    <dbReference type="NCBI Taxonomy" id="266117"/>
    <lineage>
        <taxon>Bacteria</taxon>
        <taxon>Bacillati</taxon>
        <taxon>Actinomycetota</taxon>
        <taxon>Rubrobacteria</taxon>
        <taxon>Rubrobacterales</taxon>
        <taxon>Rubrobacteraceae</taxon>
        <taxon>Rubrobacter</taxon>
    </lineage>
</organism>
<evidence type="ECO:0000255" key="1">
    <source>
        <dbReference type="HAMAP-Rule" id="MF_00500"/>
    </source>
</evidence>
<evidence type="ECO:0000256" key="2">
    <source>
        <dbReference type="SAM" id="MobiDB-lite"/>
    </source>
</evidence>
<evidence type="ECO:0000305" key="3"/>
<accession>Q1AVU9</accession>
<reference key="1">
    <citation type="submission" date="2006-06" db="EMBL/GenBank/DDBJ databases">
        <title>Complete sequence of Rubrobacter xylanophilus DSM 9941.</title>
        <authorList>
            <consortium name="US DOE Joint Genome Institute"/>
            <person name="Copeland A."/>
            <person name="Lucas S."/>
            <person name="Lapidus A."/>
            <person name="Barry K."/>
            <person name="Detter J.C."/>
            <person name="Glavina del Rio T."/>
            <person name="Hammon N."/>
            <person name="Israni S."/>
            <person name="Dalin E."/>
            <person name="Tice H."/>
            <person name="Pitluck S."/>
            <person name="Munk A.C."/>
            <person name="Brettin T."/>
            <person name="Bruce D."/>
            <person name="Han C."/>
            <person name="Tapia R."/>
            <person name="Gilna P."/>
            <person name="Schmutz J."/>
            <person name="Larimer F."/>
            <person name="Land M."/>
            <person name="Hauser L."/>
            <person name="Kyrpides N."/>
            <person name="Lykidis A."/>
            <person name="da Costa M.S."/>
            <person name="Rainey F.A."/>
            <person name="Empadinhas N."/>
            <person name="Jolivet E."/>
            <person name="Battista J.R."/>
            <person name="Richardson P."/>
        </authorList>
    </citation>
    <scope>NUCLEOTIDE SEQUENCE [LARGE SCALE GENOMIC DNA]</scope>
    <source>
        <strain>DSM 9941 / JCM 11954 / NBRC 16129 / PRD-1</strain>
    </source>
</reference>
<comment type="function">
    <text evidence="1">Binds directly to 16S ribosomal RNA.</text>
</comment>
<comment type="similarity">
    <text evidence="1">Belongs to the bacterial ribosomal protein bS20 family.</text>
</comment>
<proteinExistence type="inferred from homology"/>
<gene>
    <name evidence="1" type="primary">rpsT</name>
    <name type="ordered locus">Rxyl_1517</name>
</gene>
<feature type="chain" id="PRO_0000260141" description="Small ribosomal subunit protein bS20">
    <location>
        <begin position="1"/>
        <end position="84"/>
    </location>
</feature>
<feature type="region of interest" description="Disordered" evidence="2">
    <location>
        <begin position="1"/>
        <end position="22"/>
    </location>
</feature>
<feature type="compositionally biased region" description="Basic residues" evidence="2">
    <location>
        <begin position="9"/>
        <end position="22"/>
    </location>
</feature>
<protein>
    <recommendedName>
        <fullName evidence="1">Small ribosomal subunit protein bS20</fullName>
    </recommendedName>
    <alternativeName>
        <fullName evidence="3">30S ribosomal protein S20</fullName>
    </alternativeName>
</protein>